<protein>
    <recommendedName>
        <fullName evidence="1">Large ribosomal subunit protein uL1</fullName>
    </recommendedName>
    <alternativeName>
        <fullName evidence="2">50S ribosomal protein L1</fullName>
    </alternativeName>
</protein>
<comment type="function">
    <text evidence="1">Binds directly to 23S rRNA. The L1 stalk is quite mobile in the ribosome, and is involved in E site tRNA release.</text>
</comment>
<comment type="function">
    <text evidence="1">Protein L1 is also a translational repressor protein, it controls the translation of the L11 operon by binding to its mRNA.</text>
</comment>
<comment type="subunit">
    <text evidence="1">Part of the 50S ribosomal subunit.</text>
</comment>
<comment type="similarity">
    <text evidence="1">Belongs to the universal ribosomal protein uL1 family.</text>
</comment>
<reference key="1">
    <citation type="submission" date="2007-05" db="EMBL/GenBank/DDBJ databases">
        <title>Complete sequence of Pseudomonas putida F1.</title>
        <authorList>
            <consortium name="US DOE Joint Genome Institute"/>
            <person name="Copeland A."/>
            <person name="Lucas S."/>
            <person name="Lapidus A."/>
            <person name="Barry K."/>
            <person name="Detter J.C."/>
            <person name="Glavina del Rio T."/>
            <person name="Hammon N."/>
            <person name="Israni S."/>
            <person name="Dalin E."/>
            <person name="Tice H."/>
            <person name="Pitluck S."/>
            <person name="Chain P."/>
            <person name="Malfatti S."/>
            <person name="Shin M."/>
            <person name="Vergez L."/>
            <person name="Schmutz J."/>
            <person name="Larimer F."/>
            <person name="Land M."/>
            <person name="Hauser L."/>
            <person name="Kyrpides N."/>
            <person name="Lykidis A."/>
            <person name="Parales R."/>
            <person name="Richardson P."/>
        </authorList>
    </citation>
    <scope>NUCLEOTIDE SEQUENCE [LARGE SCALE GENOMIC DNA]</scope>
    <source>
        <strain>ATCC 700007 / DSM 6899 / JCM 31910 / BCRC 17059 / LMG 24140 / F1</strain>
    </source>
</reference>
<sequence length="231" mass="24251">MAKLTKRQKAIAEKIEAGKAYNFEEAATLLASLPAAKFVESYDIAVNLGVDPRKSDQVVRSATVLPHGTGKTVRVAVFTQGPAAEAALAAGADRVGMDDLAAEMKGGDLNYDVVIASPDAMRVVGQLGQVLGPRGLMPNPKVGTVTPDVATAVKNAKAGQVRYRTDKNGIIHTSVGKIGFEADKLKENVEALIADLKRIKPASSKGIYVKRVTLSTTMGPGLVIDQSSLNV</sequence>
<organism>
    <name type="scientific">Pseudomonas putida (strain ATCC 700007 / DSM 6899 / JCM 31910 / BCRC 17059 / LMG 24140 / F1)</name>
    <dbReference type="NCBI Taxonomy" id="351746"/>
    <lineage>
        <taxon>Bacteria</taxon>
        <taxon>Pseudomonadati</taxon>
        <taxon>Pseudomonadota</taxon>
        <taxon>Gammaproteobacteria</taxon>
        <taxon>Pseudomonadales</taxon>
        <taxon>Pseudomonadaceae</taxon>
        <taxon>Pseudomonas</taxon>
    </lineage>
</organism>
<gene>
    <name evidence="1" type="primary">rplA</name>
    <name type="ordered locus">Pput_0477</name>
</gene>
<feature type="chain" id="PRO_1000051915" description="Large ribosomal subunit protein uL1">
    <location>
        <begin position="1"/>
        <end position="231"/>
    </location>
</feature>
<evidence type="ECO:0000255" key="1">
    <source>
        <dbReference type="HAMAP-Rule" id="MF_01318"/>
    </source>
</evidence>
<evidence type="ECO:0000305" key="2"/>
<dbReference type="EMBL" id="CP000712">
    <property type="protein sequence ID" value="ABQ76647.1"/>
    <property type="molecule type" value="Genomic_DNA"/>
</dbReference>
<dbReference type="SMR" id="A5VXN7"/>
<dbReference type="KEGG" id="ppf:Pput_0477"/>
<dbReference type="eggNOG" id="COG0081">
    <property type="taxonomic scope" value="Bacteria"/>
</dbReference>
<dbReference type="HOGENOM" id="CLU_062853_0_0_6"/>
<dbReference type="GO" id="GO:0022625">
    <property type="term" value="C:cytosolic large ribosomal subunit"/>
    <property type="evidence" value="ECO:0007669"/>
    <property type="project" value="TreeGrafter"/>
</dbReference>
<dbReference type="GO" id="GO:0019843">
    <property type="term" value="F:rRNA binding"/>
    <property type="evidence" value="ECO:0007669"/>
    <property type="project" value="UniProtKB-UniRule"/>
</dbReference>
<dbReference type="GO" id="GO:0003735">
    <property type="term" value="F:structural constituent of ribosome"/>
    <property type="evidence" value="ECO:0007669"/>
    <property type="project" value="InterPro"/>
</dbReference>
<dbReference type="GO" id="GO:0000049">
    <property type="term" value="F:tRNA binding"/>
    <property type="evidence" value="ECO:0007669"/>
    <property type="project" value="UniProtKB-KW"/>
</dbReference>
<dbReference type="GO" id="GO:0006417">
    <property type="term" value="P:regulation of translation"/>
    <property type="evidence" value="ECO:0007669"/>
    <property type="project" value="UniProtKB-KW"/>
</dbReference>
<dbReference type="GO" id="GO:0006412">
    <property type="term" value="P:translation"/>
    <property type="evidence" value="ECO:0007669"/>
    <property type="project" value="UniProtKB-UniRule"/>
</dbReference>
<dbReference type="CDD" id="cd00403">
    <property type="entry name" value="Ribosomal_L1"/>
    <property type="match status" value="1"/>
</dbReference>
<dbReference type="FunFam" id="3.40.50.790:FF:000001">
    <property type="entry name" value="50S ribosomal protein L1"/>
    <property type="match status" value="1"/>
</dbReference>
<dbReference type="Gene3D" id="3.30.190.20">
    <property type="match status" value="1"/>
</dbReference>
<dbReference type="Gene3D" id="3.40.50.790">
    <property type="match status" value="1"/>
</dbReference>
<dbReference type="HAMAP" id="MF_01318_B">
    <property type="entry name" value="Ribosomal_uL1_B"/>
    <property type="match status" value="1"/>
</dbReference>
<dbReference type="InterPro" id="IPR005878">
    <property type="entry name" value="Ribosom_uL1_bac-type"/>
</dbReference>
<dbReference type="InterPro" id="IPR002143">
    <property type="entry name" value="Ribosomal_uL1"/>
</dbReference>
<dbReference type="InterPro" id="IPR023674">
    <property type="entry name" value="Ribosomal_uL1-like"/>
</dbReference>
<dbReference type="InterPro" id="IPR028364">
    <property type="entry name" value="Ribosomal_uL1/biogenesis"/>
</dbReference>
<dbReference type="InterPro" id="IPR016095">
    <property type="entry name" value="Ribosomal_uL1_3-a/b-sand"/>
</dbReference>
<dbReference type="InterPro" id="IPR023673">
    <property type="entry name" value="Ribosomal_uL1_CS"/>
</dbReference>
<dbReference type="NCBIfam" id="TIGR01169">
    <property type="entry name" value="rplA_bact"/>
    <property type="match status" value="1"/>
</dbReference>
<dbReference type="PANTHER" id="PTHR36427">
    <property type="entry name" value="54S RIBOSOMAL PROTEIN L1, MITOCHONDRIAL"/>
    <property type="match status" value="1"/>
</dbReference>
<dbReference type="PANTHER" id="PTHR36427:SF3">
    <property type="entry name" value="LARGE RIBOSOMAL SUBUNIT PROTEIN UL1M"/>
    <property type="match status" value="1"/>
</dbReference>
<dbReference type="Pfam" id="PF00687">
    <property type="entry name" value="Ribosomal_L1"/>
    <property type="match status" value="1"/>
</dbReference>
<dbReference type="PIRSF" id="PIRSF002155">
    <property type="entry name" value="Ribosomal_L1"/>
    <property type="match status" value="1"/>
</dbReference>
<dbReference type="SUPFAM" id="SSF56808">
    <property type="entry name" value="Ribosomal protein L1"/>
    <property type="match status" value="1"/>
</dbReference>
<dbReference type="PROSITE" id="PS01199">
    <property type="entry name" value="RIBOSOMAL_L1"/>
    <property type="match status" value="1"/>
</dbReference>
<accession>A5VXN7</accession>
<name>RL1_PSEP1</name>
<keyword id="KW-0678">Repressor</keyword>
<keyword id="KW-0687">Ribonucleoprotein</keyword>
<keyword id="KW-0689">Ribosomal protein</keyword>
<keyword id="KW-0694">RNA-binding</keyword>
<keyword id="KW-0699">rRNA-binding</keyword>
<keyword id="KW-0810">Translation regulation</keyword>
<keyword id="KW-0820">tRNA-binding</keyword>
<proteinExistence type="inferred from homology"/>